<accession>B8I2Y2</accession>
<sequence>MSETKWTKEQYAAITQKDCNLLVAAAAGAGKTAVLVERIIRKITDKENPVDIDSLLVVTFTNAAATEMRERIGAAISDTIEKNQGSKNISRQLILLNKASITTIHSFCLEVIRSNFQSIEIDPGFKILDETEATLLKSETLSDLFEEIYEDAEENEDFFELLESYGGNRDDLKIQDMVMSIYSFVQSYPWPEKWLEQQIESYNFEVGNDFGETTWGRILLETSLMRLEGLRDIMNEACAKIKNAQGLEKYLSVFIEDNDNLEKLIGICKTGMNWDQLYNYVNSFEFRNLPRCGKDAEKSVQESVKKIRDELKSVINGLRDEVFFMESDEIASDLKTMYPILKCVSRLVMDFGRRYAHKKSQRASVDFNDLEHFCLNILAETDKDGNIRPTKIAQNYKDKFTEILVDEYQDSNLVQEIIINMISKKDIGSPNVFMVGDVKQSIYRFRQAKPELFLEKYNNYSIDEDSSYRKILLFKNFRSRKDVVDGINYIFKQIMSQKVGELDYNEIEELNPGAGFSPCQNEETVVGGAIELHLIETSVGDNTVLSEGSEPMDEQDFPEEDEILDNIQKEARMVANRIIELFQADKDGKKYAVYDKKLGEYRNVRFSDIVILLRTTRNWTEVFSAELANADIPVFADTGSGFFKTPEVQVVLSLLQIIDNPYQDIPLLAVLRSPIVNFSTADLTDVRLMNRNASIFEALKETAVHDTQVSKKASDFLQKLEKWRDMSLYMSTHELIWQLYNETGYFSIVGAMQDGERKQANLKILFERALQYENTSYSGLFNFISFIDKLKTNKGDMGSAKVLGENDNVVRLMSIHKSKGLEFPVVFLCGCGKKFNMQDMYKSILLHQELGFGPDFVDYKKRIKYPSIPKQAIAQKIRIETLSEEMRILYVAMTRAREKLIITGSVNNIEKSALKWLGTAQSNDNKFPPHNMLKAQNYLDWICPSVMRHKDSVILRNAAGLGVDYSGPTISDDSSWTIILADQSDIAVAKRFETDTQDREDITKWLQEKGSADSGDSHEIHRRLDWKYTYRDFAQIPSKISVTELKRYFHLNNDEDNSQLQYKTATIKKPAFLEGKKGLSPAEKGTAMHFVMQHLDFHNEDIAGQVKIMVKKELLTEIQAKSIDIMKISAFINSVIGKRMLKSVKVYREVPFNIELPYKEIYPQLPDVSDYEDKILLQGVVDCYFEEEDHIVLIDYKTDYIPYGDKQSVKEKYRLQISYYSRALEMLTLKRVKERYIYLFSTGEIVEM</sequence>
<organism>
    <name type="scientific">Ruminiclostridium cellulolyticum (strain ATCC 35319 / DSM 5812 / JCM 6584 / H10)</name>
    <name type="common">Clostridium cellulolyticum</name>
    <dbReference type="NCBI Taxonomy" id="394503"/>
    <lineage>
        <taxon>Bacteria</taxon>
        <taxon>Bacillati</taxon>
        <taxon>Bacillota</taxon>
        <taxon>Clostridia</taxon>
        <taxon>Eubacteriales</taxon>
        <taxon>Oscillospiraceae</taxon>
        <taxon>Ruminiclostridium</taxon>
    </lineage>
</organism>
<keyword id="KW-0067">ATP-binding</keyword>
<keyword id="KW-0227">DNA damage</keyword>
<keyword id="KW-0234">DNA repair</keyword>
<keyword id="KW-0238">DNA-binding</keyword>
<keyword id="KW-0269">Exonuclease</keyword>
<keyword id="KW-0347">Helicase</keyword>
<keyword id="KW-0378">Hydrolase</keyword>
<keyword id="KW-0413">Isomerase</keyword>
<keyword id="KW-0540">Nuclease</keyword>
<keyword id="KW-0547">Nucleotide-binding</keyword>
<keyword id="KW-1185">Reference proteome</keyword>
<proteinExistence type="inferred from homology"/>
<name>ADDA_RUMCH</name>
<feature type="chain" id="PRO_0000379256" description="ATP-dependent helicase/nuclease subunit A">
    <location>
        <begin position="1"/>
        <end position="1248"/>
    </location>
</feature>
<feature type="domain" description="UvrD-like helicase ATP-binding" evidence="1">
    <location>
        <begin position="4"/>
        <end position="480"/>
    </location>
</feature>
<feature type="domain" description="UvrD-like helicase C-terminal" evidence="1">
    <location>
        <begin position="523"/>
        <end position="820"/>
    </location>
</feature>
<feature type="binding site" evidence="1">
    <location>
        <begin position="25"/>
        <end position="32"/>
    </location>
    <ligand>
        <name>ATP</name>
        <dbReference type="ChEBI" id="CHEBI:30616"/>
    </ligand>
</feature>
<comment type="function">
    <text evidence="1">The heterodimer acts as both an ATP-dependent DNA helicase and an ATP-dependent, dual-direction single-stranded exonuclease. Recognizes the chi site generating a DNA molecule suitable for the initiation of homologous recombination. The AddA nuclease domain is required for chi fragment generation; this subunit has the helicase and 3' -&gt; 5' nuclease activities.</text>
</comment>
<comment type="catalytic activity">
    <reaction evidence="1">
        <text>Couples ATP hydrolysis with the unwinding of duplex DNA by translocating in the 3'-5' direction.</text>
        <dbReference type="EC" id="5.6.2.4"/>
    </reaction>
</comment>
<comment type="catalytic activity">
    <reaction evidence="1">
        <text>ATP + H2O = ADP + phosphate + H(+)</text>
        <dbReference type="Rhea" id="RHEA:13065"/>
        <dbReference type="ChEBI" id="CHEBI:15377"/>
        <dbReference type="ChEBI" id="CHEBI:15378"/>
        <dbReference type="ChEBI" id="CHEBI:30616"/>
        <dbReference type="ChEBI" id="CHEBI:43474"/>
        <dbReference type="ChEBI" id="CHEBI:456216"/>
        <dbReference type="EC" id="5.6.2.4"/>
    </reaction>
</comment>
<comment type="cofactor">
    <cofactor evidence="1">
        <name>Mg(2+)</name>
        <dbReference type="ChEBI" id="CHEBI:18420"/>
    </cofactor>
</comment>
<comment type="subunit">
    <text evidence="1">Heterodimer of AddA and AddB/RexB.</text>
</comment>
<comment type="similarity">
    <text evidence="1">Belongs to the helicase family. AddA subfamily.</text>
</comment>
<protein>
    <recommendedName>
        <fullName evidence="1">ATP-dependent helicase/nuclease subunit A</fullName>
        <ecNumber evidence="1">3.1.-.-</ecNumber>
        <ecNumber evidence="1">5.6.2.4</ecNumber>
    </recommendedName>
    <alternativeName>
        <fullName evidence="1">ATP-dependent helicase/nuclease AddA</fullName>
    </alternativeName>
    <alternativeName>
        <fullName evidence="1">DNA 3'-5' helicase AddA</fullName>
    </alternativeName>
</protein>
<reference key="1">
    <citation type="submission" date="2009-01" db="EMBL/GenBank/DDBJ databases">
        <title>Complete sequence of Clostridium cellulolyticum H10.</title>
        <authorList>
            <consortium name="US DOE Joint Genome Institute"/>
            <person name="Lucas S."/>
            <person name="Copeland A."/>
            <person name="Lapidus A."/>
            <person name="Glavina del Rio T."/>
            <person name="Dalin E."/>
            <person name="Tice H."/>
            <person name="Bruce D."/>
            <person name="Goodwin L."/>
            <person name="Pitluck S."/>
            <person name="Chertkov O."/>
            <person name="Saunders E."/>
            <person name="Brettin T."/>
            <person name="Detter J.C."/>
            <person name="Han C."/>
            <person name="Larimer F."/>
            <person name="Land M."/>
            <person name="Hauser L."/>
            <person name="Kyrpides N."/>
            <person name="Ivanova N."/>
            <person name="Zhou J."/>
            <person name="Richardson P."/>
        </authorList>
    </citation>
    <scope>NUCLEOTIDE SEQUENCE [LARGE SCALE GENOMIC DNA]</scope>
    <source>
        <strain>ATCC 35319 / DSM 5812 / JCM 6584 / H10</strain>
    </source>
</reference>
<evidence type="ECO:0000255" key="1">
    <source>
        <dbReference type="HAMAP-Rule" id="MF_01451"/>
    </source>
</evidence>
<gene>
    <name evidence="1" type="primary">addA</name>
    <name type="ordered locus">Ccel_1774</name>
</gene>
<dbReference type="EC" id="3.1.-.-" evidence="1"/>
<dbReference type="EC" id="5.6.2.4" evidence="1"/>
<dbReference type="EMBL" id="CP001348">
    <property type="protein sequence ID" value="ACL76125.1"/>
    <property type="molecule type" value="Genomic_DNA"/>
</dbReference>
<dbReference type="RefSeq" id="WP_015925240.1">
    <property type="nucleotide sequence ID" value="NC_011898.1"/>
</dbReference>
<dbReference type="SMR" id="B8I2Y2"/>
<dbReference type="STRING" id="394503.Ccel_1774"/>
<dbReference type="KEGG" id="cce:Ccel_1774"/>
<dbReference type="eggNOG" id="COG1074">
    <property type="taxonomic scope" value="Bacteria"/>
</dbReference>
<dbReference type="HOGENOM" id="CLU_001114_3_1_9"/>
<dbReference type="OrthoDB" id="9810135at2"/>
<dbReference type="Proteomes" id="UP000001349">
    <property type="component" value="Chromosome"/>
</dbReference>
<dbReference type="GO" id="GO:0005829">
    <property type="term" value="C:cytosol"/>
    <property type="evidence" value="ECO:0007669"/>
    <property type="project" value="TreeGrafter"/>
</dbReference>
<dbReference type="GO" id="GO:0033202">
    <property type="term" value="C:DNA helicase complex"/>
    <property type="evidence" value="ECO:0007669"/>
    <property type="project" value="TreeGrafter"/>
</dbReference>
<dbReference type="GO" id="GO:0043138">
    <property type="term" value="F:3'-5' DNA helicase activity"/>
    <property type="evidence" value="ECO:0007669"/>
    <property type="project" value="UniProtKB-UniRule"/>
</dbReference>
<dbReference type="GO" id="GO:0008408">
    <property type="term" value="F:3'-5' exonuclease activity"/>
    <property type="evidence" value="ECO:0007669"/>
    <property type="project" value="UniProtKB-UniRule"/>
</dbReference>
<dbReference type="GO" id="GO:0005524">
    <property type="term" value="F:ATP binding"/>
    <property type="evidence" value="ECO:0007669"/>
    <property type="project" value="UniProtKB-UniRule"/>
</dbReference>
<dbReference type="GO" id="GO:0016887">
    <property type="term" value="F:ATP hydrolysis activity"/>
    <property type="evidence" value="ECO:0007669"/>
    <property type="project" value="RHEA"/>
</dbReference>
<dbReference type="GO" id="GO:0003690">
    <property type="term" value="F:double-stranded DNA binding"/>
    <property type="evidence" value="ECO:0007669"/>
    <property type="project" value="UniProtKB-UniRule"/>
</dbReference>
<dbReference type="GO" id="GO:0000724">
    <property type="term" value="P:double-strand break repair via homologous recombination"/>
    <property type="evidence" value="ECO:0007669"/>
    <property type="project" value="UniProtKB-UniRule"/>
</dbReference>
<dbReference type="CDD" id="cd18807">
    <property type="entry name" value="SF1_C_UvrD"/>
    <property type="match status" value="1"/>
</dbReference>
<dbReference type="FunFam" id="3.40.50.300:FF:001236">
    <property type="entry name" value="ATP-dependent helicase/nuclease subunit A"/>
    <property type="match status" value="1"/>
</dbReference>
<dbReference type="Gene3D" id="3.90.320.10">
    <property type="match status" value="1"/>
</dbReference>
<dbReference type="Gene3D" id="3.40.50.300">
    <property type="entry name" value="P-loop containing nucleotide triphosphate hydrolases"/>
    <property type="match status" value="4"/>
</dbReference>
<dbReference type="HAMAP" id="MF_01451">
    <property type="entry name" value="AddA"/>
    <property type="match status" value="1"/>
</dbReference>
<dbReference type="InterPro" id="IPR014152">
    <property type="entry name" value="AddA"/>
</dbReference>
<dbReference type="InterPro" id="IPR014017">
    <property type="entry name" value="DNA_helicase_UvrD-like_C"/>
</dbReference>
<dbReference type="InterPro" id="IPR000212">
    <property type="entry name" value="DNA_helicase_UvrD/REP"/>
</dbReference>
<dbReference type="InterPro" id="IPR027417">
    <property type="entry name" value="P-loop_NTPase"/>
</dbReference>
<dbReference type="InterPro" id="IPR011604">
    <property type="entry name" value="PDDEXK-like_dom_sf"/>
</dbReference>
<dbReference type="InterPro" id="IPR038726">
    <property type="entry name" value="PDDEXK_AddAB-type"/>
</dbReference>
<dbReference type="InterPro" id="IPR011335">
    <property type="entry name" value="Restrct_endonuc-II-like"/>
</dbReference>
<dbReference type="InterPro" id="IPR014016">
    <property type="entry name" value="UvrD-like_ATP-bd"/>
</dbReference>
<dbReference type="NCBIfam" id="TIGR02785">
    <property type="entry name" value="addA_Gpos"/>
    <property type="match status" value="1"/>
</dbReference>
<dbReference type="PANTHER" id="PTHR11070:SF48">
    <property type="entry name" value="ATP-DEPENDENT HELICASE_NUCLEASE SUBUNIT A"/>
    <property type="match status" value="1"/>
</dbReference>
<dbReference type="PANTHER" id="PTHR11070">
    <property type="entry name" value="UVRD / RECB / PCRA DNA HELICASE FAMILY MEMBER"/>
    <property type="match status" value="1"/>
</dbReference>
<dbReference type="Pfam" id="PF12705">
    <property type="entry name" value="PDDEXK_1"/>
    <property type="match status" value="1"/>
</dbReference>
<dbReference type="Pfam" id="PF00580">
    <property type="entry name" value="UvrD-helicase"/>
    <property type="match status" value="1"/>
</dbReference>
<dbReference type="Pfam" id="PF13361">
    <property type="entry name" value="UvrD_C"/>
    <property type="match status" value="1"/>
</dbReference>
<dbReference type="SUPFAM" id="SSF52540">
    <property type="entry name" value="P-loop containing nucleoside triphosphate hydrolases"/>
    <property type="match status" value="1"/>
</dbReference>
<dbReference type="SUPFAM" id="SSF52980">
    <property type="entry name" value="Restriction endonuclease-like"/>
    <property type="match status" value="1"/>
</dbReference>
<dbReference type="PROSITE" id="PS51198">
    <property type="entry name" value="UVRD_HELICASE_ATP_BIND"/>
    <property type="match status" value="1"/>
</dbReference>
<dbReference type="PROSITE" id="PS51217">
    <property type="entry name" value="UVRD_HELICASE_CTER"/>
    <property type="match status" value="1"/>
</dbReference>